<evidence type="ECO:0000255" key="1">
    <source>
        <dbReference type="HAMAP-Rule" id="MF_00210"/>
    </source>
</evidence>
<evidence type="ECO:0000305" key="2"/>
<gene>
    <name evidence="1" type="primary">aroA</name>
</gene>
<proteinExistence type="inferred from homology"/>
<reference key="1">
    <citation type="journal article" date="1994" name="Appl. Environ. Microbiol.">
        <title>Molecular gene cloning and nucleotide sequencing and construction of an aroA mutant of Pasteurella haemolytica serotype A1.</title>
        <authorList>
            <person name="Tatum F.M."/>
            <person name="Briggs R.E."/>
            <person name="Halling S.M."/>
        </authorList>
    </citation>
    <scope>NUCLEOTIDE SEQUENCE [GENOMIC DNA]</scope>
    <source>
        <strain>Serotype A1 / NADC-D60</strain>
    </source>
</reference>
<reference key="2">
    <citation type="submission" date="1997-02" db="EMBL/GenBank/DDBJ databases">
        <title>Molecular cloning, nucleotide sequencing, and construction of a Pasteurella haemolytica serotype 2 aroA mutant.</title>
        <authorList>
            <person name="Hellrung D.J."/>
            <person name="Tatum F.M."/>
            <person name="Briggs R.E."/>
        </authorList>
    </citation>
    <scope>NUCLEOTIDE SEQUENCE [GENOMIC DNA]</scope>
    <source>
        <strain>Serotype 2 / NADC-D171</strain>
    </source>
</reference>
<dbReference type="EC" id="2.5.1.19" evidence="1"/>
<dbReference type="EMBL" id="U03068">
    <property type="protein sequence ID" value="AAA21529.1"/>
    <property type="molecule type" value="Genomic_DNA"/>
</dbReference>
<dbReference type="EMBL" id="U89948">
    <property type="protein sequence ID" value="AAB86439.1"/>
    <property type="molecule type" value="Genomic_DNA"/>
</dbReference>
<dbReference type="RefSeq" id="WP_006250709.1">
    <property type="nucleotide sequence ID" value="NZ_VAIO01000037.1"/>
</dbReference>
<dbReference type="SMR" id="P54220"/>
<dbReference type="STRING" id="75985.WC39_07780"/>
<dbReference type="PATRIC" id="fig|75985.47.peg.1944"/>
<dbReference type="UniPathway" id="UPA00053">
    <property type="reaction ID" value="UER00089"/>
</dbReference>
<dbReference type="GO" id="GO:0005737">
    <property type="term" value="C:cytoplasm"/>
    <property type="evidence" value="ECO:0007669"/>
    <property type="project" value="UniProtKB-SubCell"/>
</dbReference>
<dbReference type="GO" id="GO:0003866">
    <property type="term" value="F:3-phosphoshikimate 1-carboxyvinyltransferase activity"/>
    <property type="evidence" value="ECO:0007669"/>
    <property type="project" value="UniProtKB-UniRule"/>
</dbReference>
<dbReference type="GO" id="GO:0008652">
    <property type="term" value="P:amino acid biosynthetic process"/>
    <property type="evidence" value="ECO:0007669"/>
    <property type="project" value="UniProtKB-KW"/>
</dbReference>
<dbReference type="GO" id="GO:0009073">
    <property type="term" value="P:aromatic amino acid family biosynthetic process"/>
    <property type="evidence" value="ECO:0007669"/>
    <property type="project" value="UniProtKB-KW"/>
</dbReference>
<dbReference type="GO" id="GO:0009423">
    <property type="term" value="P:chorismate biosynthetic process"/>
    <property type="evidence" value="ECO:0007669"/>
    <property type="project" value="UniProtKB-UniRule"/>
</dbReference>
<dbReference type="CDD" id="cd01556">
    <property type="entry name" value="EPSP_synthase"/>
    <property type="match status" value="1"/>
</dbReference>
<dbReference type="FunFam" id="3.65.10.10:FF:000003">
    <property type="entry name" value="3-phosphoshikimate 1-carboxyvinyltransferase"/>
    <property type="match status" value="1"/>
</dbReference>
<dbReference type="FunFam" id="3.65.10.10:FF:000004">
    <property type="entry name" value="3-phosphoshikimate 1-carboxyvinyltransferase"/>
    <property type="match status" value="1"/>
</dbReference>
<dbReference type="Gene3D" id="3.65.10.10">
    <property type="entry name" value="Enolpyruvate transferase domain"/>
    <property type="match status" value="2"/>
</dbReference>
<dbReference type="HAMAP" id="MF_00210">
    <property type="entry name" value="EPSP_synth"/>
    <property type="match status" value="1"/>
</dbReference>
<dbReference type="InterPro" id="IPR001986">
    <property type="entry name" value="Enolpyruvate_Tfrase_dom"/>
</dbReference>
<dbReference type="InterPro" id="IPR036968">
    <property type="entry name" value="Enolpyruvate_Tfrase_sf"/>
</dbReference>
<dbReference type="InterPro" id="IPR006264">
    <property type="entry name" value="EPSP_synthase"/>
</dbReference>
<dbReference type="InterPro" id="IPR023193">
    <property type="entry name" value="EPSP_synthase_CS"/>
</dbReference>
<dbReference type="InterPro" id="IPR013792">
    <property type="entry name" value="RNA3'P_cycl/enolpyr_Trfase_a/b"/>
</dbReference>
<dbReference type="NCBIfam" id="TIGR01356">
    <property type="entry name" value="aroA"/>
    <property type="match status" value="1"/>
</dbReference>
<dbReference type="PANTHER" id="PTHR21090">
    <property type="entry name" value="AROM/DEHYDROQUINATE SYNTHASE"/>
    <property type="match status" value="1"/>
</dbReference>
<dbReference type="PANTHER" id="PTHR21090:SF5">
    <property type="entry name" value="PENTAFUNCTIONAL AROM POLYPEPTIDE"/>
    <property type="match status" value="1"/>
</dbReference>
<dbReference type="Pfam" id="PF00275">
    <property type="entry name" value="EPSP_synthase"/>
    <property type="match status" value="1"/>
</dbReference>
<dbReference type="PIRSF" id="PIRSF000505">
    <property type="entry name" value="EPSPS"/>
    <property type="match status" value="1"/>
</dbReference>
<dbReference type="SUPFAM" id="SSF55205">
    <property type="entry name" value="EPT/RTPC-like"/>
    <property type="match status" value="1"/>
</dbReference>
<dbReference type="PROSITE" id="PS00104">
    <property type="entry name" value="EPSP_SYNTHASE_1"/>
    <property type="match status" value="1"/>
</dbReference>
<dbReference type="PROSITE" id="PS00885">
    <property type="entry name" value="EPSP_SYNTHASE_2"/>
    <property type="match status" value="1"/>
</dbReference>
<accession>P54220</accession>
<accession>P96968</accession>
<comment type="function">
    <text evidence="1">Catalyzes the transfer of the enolpyruvyl moiety of phosphoenolpyruvate (PEP) to the 5-hydroxyl of shikimate-3-phosphate (S3P) to produce enolpyruvyl shikimate-3-phosphate and inorganic phosphate.</text>
</comment>
<comment type="catalytic activity">
    <reaction evidence="1">
        <text>3-phosphoshikimate + phosphoenolpyruvate = 5-O-(1-carboxyvinyl)-3-phosphoshikimate + phosphate</text>
        <dbReference type="Rhea" id="RHEA:21256"/>
        <dbReference type="ChEBI" id="CHEBI:43474"/>
        <dbReference type="ChEBI" id="CHEBI:57701"/>
        <dbReference type="ChEBI" id="CHEBI:58702"/>
        <dbReference type="ChEBI" id="CHEBI:145989"/>
        <dbReference type="EC" id="2.5.1.19"/>
    </reaction>
    <physiologicalReaction direction="left-to-right" evidence="1">
        <dbReference type="Rhea" id="RHEA:21257"/>
    </physiologicalReaction>
</comment>
<comment type="pathway">
    <text evidence="1">Metabolic intermediate biosynthesis; chorismate biosynthesis; chorismate from D-erythrose 4-phosphate and phosphoenolpyruvate: step 6/7.</text>
</comment>
<comment type="subunit">
    <text evidence="1">Monomer.</text>
</comment>
<comment type="subcellular location">
    <subcellularLocation>
        <location evidence="1">Cytoplasm</location>
    </subcellularLocation>
</comment>
<comment type="similarity">
    <text evidence="1 2">Belongs to the EPSP synthase family.</text>
</comment>
<name>AROA_MANHA</name>
<organism>
    <name type="scientific">Mannheimia haemolytica</name>
    <name type="common">Pasteurella haemolytica</name>
    <dbReference type="NCBI Taxonomy" id="75985"/>
    <lineage>
        <taxon>Bacteria</taxon>
        <taxon>Pseudomonadati</taxon>
        <taxon>Pseudomonadota</taxon>
        <taxon>Gammaproteobacteria</taxon>
        <taxon>Pasteurellales</taxon>
        <taxon>Pasteurellaceae</taxon>
        <taxon>Mannheimia</taxon>
    </lineage>
</organism>
<keyword id="KW-0028">Amino-acid biosynthesis</keyword>
<keyword id="KW-0057">Aromatic amino acid biosynthesis</keyword>
<keyword id="KW-0963">Cytoplasm</keyword>
<keyword id="KW-0808">Transferase</keyword>
<feature type="chain" id="PRO_0000088277" description="3-phosphoshikimate 1-carboxyvinyltransferase">
    <location>
        <begin position="1"/>
        <end position="432"/>
    </location>
</feature>
<feature type="active site" description="Proton acceptor" evidence="1">
    <location>
        <position position="317"/>
    </location>
</feature>
<feature type="binding site" evidence="1">
    <location>
        <position position="22"/>
    </location>
    <ligand>
        <name>3-phosphoshikimate</name>
        <dbReference type="ChEBI" id="CHEBI:145989"/>
    </ligand>
</feature>
<feature type="binding site" evidence="1">
    <location>
        <position position="22"/>
    </location>
    <ligand>
        <name>phosphoenolpyruvate</name>
        <dbReference type="ChEBI" id="CHEBI:58702"/>
    </ligand>
</feature>
<feature type="binding site" evidence="1">
    <location>
        <position position="23"/>
    </location>
    <ligand>
        <name>3-phosphoshikimate</name>
        <dbReference type="ChEBI" id="CHEBI:145989"/>
    </ligand>
</feature>
<feature type="binding site" evidence="1">
    <location>
        <position position="27"/>
    </location>
    <ligand>
        <name>3-phosphoshikimate</name>
        <dbReference type="ChEBI" id="CHEBI:145989"/>
    </ligand>
</feature>
<feature type="binding site" evidence="1">
    <location>
        <position position="96"/>
    </location>
    <ligand>
        <name>phosphoenolpyruvate</name>
        <dbReference type="ChEBI" id="CHEBI:58702"/>
    </ligand>
</feature>
<feature type="binding site" evidence="1">
    <location>
        <position position="127"/>
    </location>
    <ligand>
        <name>phosphoenolpyruvate</name>
        <dbReference type="ChEBI" id="CHEBI:58702"/>
    </ligand>
</feature>
<feature type="binding site" evidence="1">
    <location>
        <position position="173"/>
    </location>
    <ligand>
        <name>3-phosphoshikimate</name>
        <dbReference type="ChEBI" id="CHEBI:145989"/>
    </ligand>
</feature>
<feature type="binding site" evidence="1">
    <location>
        <position position="174"/>
    </location>
    <ligand>
        <name>3-phosphoshikimate</name>
        <dbReference type="ChEBI" id="CHEBI:145989"/>
    </ligand>
</feature>
<feature type="binding site" evidence="1">
    <location>
        <position position="175"/>
    </location>
    <ligand>
        <name>3-phosphoshikimate</name>
        <dbReference type="ChEBI" id="CHEBI:145989"/>
    </ligand>
</feature>
<feature type="binding site" evidence="1">
    <location>
        <position position="175"/>
    </location>
    <ligand>
        <name>phosphoenolpyruvate</name>
        <dbReference type="ChEBI" id="CHEBI:58702"/>
    </ligand>
</feature>
<feature type="binding site" evidence="1">
    <location>
        <position position="201"/>
    </location>
    <ligand>
        <name>3-phosphoshikimate</name>
        <dbReference type="ChEBI" id="CHEBI:145989"/>
    </ligand>
</feature>
<feature type="binding site" evidence="1">
    <location>
        <position position="317"/>
    </location>
    <ligand>
        <name>3-phosphoshikimate</name>
        <dbReference type="ChEBI" id="CHEBI:145989"/>
    </ligand>
</feature>
<feature type="binding site" evidence="1">
    <location>
        <position position="340"/>
    </location>
    <ligand>
        <name>3-phosphoshikimate</name>
        <dbReference type="ChEBI" id="CHEBI:145989"/>
    </ligand>
</feature>
<feature type="binding site" evidence="1">
    <location>
        <position position="344"/>
    </location>
    <ligand>
        <name>3-phosphoshikimate</name>
        <dbReference type="ChEBI" id="CHEBI:145989"/>
    </ligand>
</feature>
<feature type="binding site" evidence="1">
    <location>
        <position position="348"/>
    </location>
    <ligand>
        <name>phosphoenolpyruvate</name>
        <dbReference type="ChEBI" id="CHEBI:58702"/>
    </ligand>
</feature>
<feature type="binding site" evidence="1">
    <location>
        <position position="392"/>
    </location>
    <ligand>
        <name>phosphoenolpyruvate</name>
        <dbReference type="ChEBI" id="CHEBI:58702"/>
    </ligand>
</feature>
<feature type="binding site" evidence="1">
    <location>
        <position position="417"/>
    </location>
    <ligand>
        <name>phosphoenolpyruvate</name>
        <dbReference type="ChEBI" id="CHEBI:58702"/>
    </ligand>
</feature>
<feature type="sequence conflict" description="In Ref. 1; AAA21529." evidence="2" ref="1">
    <original>V</original>
    <variation>L</variation>
    <location>
        <position position="75"/>
    </location>
</feature>
<feature type="sequence conflict" description="In Ref. 1; AAA21529." evidence="2" ref="1">
    <original>AETA</original>
    <variation>EEKS</variation>
    <location>
        <begin position="111"/>
        <end position="114"/>
    </location>
</feature>
<feature type="sequence conflict" description="In Ref. 1; AAA21529." evidence="2" ref="1">
    <original>GLQ</original>
    <variation>VCR</variation>
    <location>
        <begin position="160"/>
        <end position="162"/>
    </location>
</feature>
<feature type="sequence conflict" description="In Ref. 1; AAA21529." evidence="2" ref="1">
    <original>S</original>
    <variation>G</variation>
    <location>
        <position position="189"/>
    </location>
</feature>
<feature type="sequence conflict" description="In Ref. 1; AAA21529." evidence="2" ref="1">
    <original>GKV</original>
    <variation>AG</variation>
    <location>
        <begin position="262"/>
        <end position="264"/>
    </location>
</feature>
<feature type="sequence conflict" description="In Ref. 1; AAA21529." evidence="2" ref="1">
    <original>E</original>
    <variation>EEGE</variation>
    <location>
        <position position="367"/>
    </location>
</feature>
<feature type="sequence conflict" description="In Ref. 1; AAA21529." evidence="2" ref="1">
    <original>E</original>
    <variation>D</variation>
    <location>
        <position position="425"/>
    </location>
</feature>
<sequence length="432" mass="47064">MEKLTLTPISRVEGEINLPGSKSLSNRALLLAALATGTTQVTNLLDSDDIRHMLNALKALGVKYELSDDKTVCVVEGIGGAFKVQNGLSLFLGNAGTAMRPLAAALCLKGAETAQIILTGEPRMKERPIKHLVDALRQVGAEVQYLENEGYPPLAISNSGLQGGKVQIDGSISSQFLTALLMSAPLAESDMEIEIIGDLVSKPYIDITLSMMNDFGITVENRDYKTFLVKGKQGYVAPQGNYLVEGDASSASYFLASGAIKGKVKVTGIGKKSIQGDRLFADVLEKMGAKITWGEDFIQAEQSPLKGVDMDMNHIPDAAMTIATTALFAEGETVIRNIYNWRVKETDRLTAMATELRKVGAEVEEGEDFIRIQPLALENFQHAEIETYNDHRMAMCFSLIALSNTEVTILDPNCTAKTFPTYFRELEKLSVR</sequence>
<protein>
    <recommendedName>
        <fullName evidence="1">3-phosphoshikimate 1-carboxyvinyltransferase</fullName>
        <ecNumber evidence="1">2.5.1.19</ecNumber>
    </recommendedName>
    <alternativeName>
        <fullName evidence="1">5-enolpyruvylshikimate-3-phosphate synthase</fullName>
        <shortName evidence="1">EPSP synthase</shortName>
        <shortName evidence="1">EPSPS</shortName>
    </alternativeName>
</protein>